<dbReference type="EC" id="2.7.1.24" evidence="1"/>
<dbReference type="EMBL" id="CP000051">
    <property type="protein sequence ID" value="AAX50767.1"/>
    <property type="molecule type" value="Genomic_DNA"/>
</dbReference>
<dbReference type="RefSeq" id="WP_011324753.1">
    <property type="nucleotide sequence ID" value="NC_007429.1"/>
</dbReference>
<dbReference type="SMR" id="Q3KLK5"/>
<dbReference type="KEGG" id="cta:CTA_0539"/>
<dbReference type="HOGENOM" id="CLU_057180_3_1_0"/>
<dbReference type="UniPathway" id="UPA00241">
    <property type="reaction ID" value="UER00356"/>
</dbReference>
<dbReference type="Proteomes" id="UP000002532">
    <property type="component" value="Chromosome"/>
</dbReference>
<dbReference type="GO" id="GO:0005737">
    <property type="term" value="C:cytoplasm"/>
    <property type="evidence" value="ECO:0007669"/>
    <property type="project" value="UniProtKB-SubCell"/>
</dbReference>
<dbReference type="GO" id="GO:0005524">
    <property type="term" value="F:ATP binding"/>
    <property type="evidence" value="ECO:0007669"/>
    <property type="project" value="UniProtKB-UniRule"/>
</dbReference>
<dbReference type="GO" id="GO:0004140">
    <property type="term" value="F:dephospho-CoA kinase activity"/>
    <property type="evidence" value="ECO:0007669"/>
    <property type="project" value="UniProtKB-UniRule"/>
</dbReference>
<dbReference type="GO" id="GO:0015937">
    <property type="term" value="P:coenzyme A biosynthetic process"/>
    <property type="evidence" value="ECO:0007669"/>
    <property type="project" value="UniProtKB-UniRule"/>
</dbReference>
<dbReference type="CDD" id="cd02022">
    <property type="entry name" value="DPCK"/>
    <property type="match status" value="1"/>
</dbReference>
<dbReference type="FunFam" id="3.40.50.300:FF:004390">
    <property type="entry name" value="Dephospho-CoA kinase"/>
    <property type="match status" value="1"/>
</dbReference>
<dbReference type="Gene3D" id="3.40.50.300">
    <property type="entry name" value="P-loop containing nucleotide triphosphate hydrolases"/>
    <property type="match status" value="1"/>
</dbReference>
<dbReference type="HAMAP" id="MF_00376">
    <property type="entry name" value="Dephospho_CoA_kinase"/>
    <property type="match status" value="1"/>
</dbReference>
<dbReference type="InterPro" id="IPR001977">
    <property type="entry name" value="Depp_CoAkinase"/>
</dbReference>
<dbReference type="InterPro" id="IPR027417">
    <property type="entry name" value="P-loop_NTPase"/>
</dbReference>
<dbReference type="NCBIfam" id="TIGR00152">
    <property type="entry name" value="dephospho-CoA kinase"/>
    <property type="match status" value="1"/>
</dbReference>
<dbReference type="PANTHER" id="PTHR10695:SF46">
    <property type="entry name" value="BIFUNCTIONAL COENZYME A SYNTHASE-RELATED"/>
    <property type="match status" value="1"/>
</dbReference>
<dbReference type="PANTHER" id="PTHR10695">
    <property type="entry name" value="DEPHOSPHO-COA KINASE-RELATED"/>
    <property type="match status" value="1"/>
</dbReference>
<dbReference type="Pfam" id="PF01121">
    <property type="entry name" value="CoaE"/>
    <property type="match status" value="1"/>
</dbReference>
<dbReference type="SUPFAM" id="SSF52540">
    <property type="entry name" value="P-loop containing nucleoside triphosphate hydrolases"/>
    <property type="match status" value="1"/>
</dbReference>
<dbReference type="PROSITE" id="PS51219">
    <property type="entry name" value="DPCK"/>
    <property type="match status" value="1"/>
</dbReference>
<evidence type="ECO:0000255" key="1">
    <source>
        <dbReference type="HAMAP-Rule" id="MF_00376"/>
    </source>
</evidence>
<feature type="chain" id="PRO_0000243273" description="Dephospho-CoA kinase">
    <location>
        <begin position="1"/>
        <end position="202"/>
    </location>
</feature>
<feature type="domain" description="DPCK" evidence="1">
    <location>
        <begin position="6"/>
        <end position="202"/>
    </location>
</feature>
<feature type="binding site" evidence="1">
    <location>
        <begin position="14"/>
        <end position="19"/>
    </location>
    <ligand>
        <name>ATP</name>
        <dbReference type="ChEBI" id="CHEBI:30616"/>
    </ligand>
</feature>
<accession>Q3KLK5</accession>
<gene>
    <name evidence="1" type="primary">coaE</name>
    <name type="ordered locus">CTA_0539</name>
</gene>
<comment type="function">
    <text evidence="1">Catalyzes the phosphorylation of the 3'-hydroxyl group of dephosphocoenzyme A to form coenzyme A.</text>
</comment>
<comment type="catalytic activity">
    <reaction evidence="1">
        <text>3'-dephospho-CoA + ATP = ADP + CoA + H(+)</text>
        <dbReference type="Rhea" id="RHEA:18245"/>
        <dbReference type="ChEBI" id="CHEBI:15378"/>
        <dbReference type="ChEBI" id="CHEBI:30616"/>
        <dbReference type="ChEBI" id="CHEBI:57287"/>
        <dbReference type="ChEBI" id="CHEBI:57328"/>
        <dbReference type="ChEBI" id="CHEBI:456216"/>
        <dbReference type="EC" id="2.7.1.24"/>
    </reaction>
</comment>
<comment type="pathway">
    <text evidence="1">Cofactor biosynthesis; coenzyme A biosynthesis; CoA from (R)-pantothenate: step 5/5.</text>
</comment>
<comment type="subcellular location">
    <subcellularLocation>
        <location evidence="1">Cytoplasm</location>
    </subcellularLocation>
</comment>
<comment type="similarity">
    <text evidence="1">Belongs to the CoaE family.</text>
</comment>
<name>COAE_CHLTA</name>
<reference key="1">
    <citation type="journal article" date="2005" name="Infect. Immun.">
        <title>Comparative genomic analysis of Chlamydia trachomatis oculotropic and genitotropic strains.</title>
        <authorList>
            <person name="Carlson J.H."/>
            <person name="Porcella S.F."/>
            <person name="McClarty G."/>
            <person name="Caldwell H.D."/>
        </authorList>
    </citation>
    <scope>NUCLEOTIDE SEQUENCE [LARGE SCALE GENOMIC DNA]</scope>
    <source>
        <strain>ATCC VR-571B / DSM 19440 / HAR-13</strain>
    </source>
</reference>
<organism>
    <name type="scientific">Chlamydia trachomatis serovar A (strain ATCC VR-571B / DSM 19440 / HAR-13)</name>
    <dbReference type="NCBI Taxonomy" id="315277"/>
    <lineage>
        <taxon>Bacteria</taxon>
        <taxon>Pseudomonadati</taxon>
        <taxon>Chlamydiota</taxon>
        <taxon>Chlamydiia</taxon>
        <taxon>Chlamydiales</taxon>
        <taxon>Chlamydiaceae</taxon>
        <taxon>Chlamydia/Chlamydophila group</taxon>
        <taxon>Chlamydia</taxon>
    </lineage>
</organism>
<proteinExistence type="inferred from homology"/>
<protein>
    <recommendedName>
        <fullName evidence="1">Dephospho-CoA kinase</fullName>
        <ecNumber evidence="1">2.7.1.24</ecNumber>
    </recommendedName>
    <alternativeName>
        <fullName evidence="1">Dephosphocoenzyme A kinase</fullName>
    </alternativeName>
</protein>
<sequence>MLDLLKISVTGDPSSGKTEACQVFEDLGAYVISADKVSHSFLVPYTSVGQRIIDLLGPEIIIENTLSRKAIAEKVFGNRDLLLSLEEILHPEVCRFVEEKYAHVVQEQKYPLFIAEFPLLYEIQYADWFDQVILISADTGIRKERFLKKTGGSDTSFDLRCARFSSLEEKILRADVVIENNGTKEEFRCKVKQCFKALKGTI</sequence>
<keyword id="KW-0067">ATP-binding</keyword>
<keyword id="KW-0173">Coenzyme A biosynthesis</keyword>
<keyword id="KW-0963">Cytoplasm</keyword>
<keyword id="KW-0418">Kinase</keyword>
<keyword id="KW-0547">Nucleotide-binding</keyword>
<keyword id="KW-0808">Transferase</keyword>